<protein>
    <recommendedName>
        <fullName>Metalloprotease MmpA</fullName>
        <ecNumber>3.4.24.-</ecNumber>
    </recommendedName>
    <alternativeName>
        <fullName>Membrane metalloprotease A</fullName>
    </alternativeName>
</protein>
<comment type="function">
    <text>Involved in the regulated intramembrane proteolysis (RIP) of the short isoform of PodJ protein (PodJS), during the swarmer-to-stalked transition. The cleavage occurs near or within the single transmembrane of PodJS thereby releasing the N-terminal segment into the cytoplasm for subsequent degradation. It contributes to preserve asymmetry in the next cell cycle through sequential degradation.</text>
</comment>
<comment type="cofactor">
    <cofactor evidence="1">
        <name>Zn(2+)</name>
        <dbReference type="ChEBI" id="CHEBI:29105"/>
    </cofactor>
</comment>
<comment type="subcellular location">
    <subcellularLocation>
        <location evidence="1">Cell inner membrane</location>
        <topology evidence="1">Multi-pass membrane protein</topology>
    </subcellularLocation>
</comment>
<comment type="developmental stage">
    <text>Expressed throughout the cell cycle.</text>
</comment>
<comment type="miscellaneous">
    <text>Degradation of PodJS is not regulated by cyclic variation of MmpA level.</text>
</comment>
<comment type="similarity">
    <text evidence="3">Belongs to the peptidase M50B family.</text>
</comment>
<reference key="1">
    <citation type="journal article" date="2001" name="Proc. Natl. Acad. Sci. U.S.A.">
        <title>Complete genome sequence of Caulobacter crescentus.</title>
        <authorList>
            <person name="Nierman W.C."/>
            <person name="Feldblyum T.V."/>
            <person name="Laub M.T."/>
            <person name="Paulsen I.T."/>
            <person name="Nelson K.E."/>
            <person name="Eisen J.A."/>
            <person name="Heidelberg J.F."/>
            <person name="Alley M.R.K."/>
            <person name="Ohta N."/>
            <person name="Maddock J.R."/>
            <person name="Potocka I."/>
            <person name="Nelson W.C."/>
            <person name="Newton A."/>
            <person name="Stephens C."/>
            <person name="Phadke N.D."/>
            <person name="Ely B."/>
            <person name="DeBoy R.T."/>
            <person name="Dodson R.J."/>
            <person name="Durkin A.S."/>
            <person name="Gwinn M.L."/>
            <person name="Haft D.H."/>
            <person name="Kolonay J.F."/>
            <person name="Smit J."/>
            <person name="Craven M.B."/>
            <person name="Khouri H.M."/>
            <person name="Shetty J."/>
            <person name="Berry K.J."/>
            <person name="Utterback T.R."/>
            <person name="Tran K."/>
            <person name="Wolf A.M."/>
            <person name="Vamathevan J.J."/>
            <person name="Ermolaeva M.D."/>
            <person name="White O."/>
            <person name="Salzberg S.L."/>
            <person name="Venter J.C."/>
            <person name="Shapiro L."/>
            <person name="Fraser C.M."/>
        </authorList>
    </citation>
    <scope>NUCLEOTIDE SEQUENCE [LARGE SCALE GENOMIC DNA]</scope>
    <source>
        <strain>ATCC 19089 / CIP 103742 / CB 15</strain>
    </source>
</reference>
<reference key="2">
    <citation type="journal article" date="2005" name="Mol. Microbiol.">
        <title>A membrane metalloprotease participates in the sequential degradation of a Caulobacter polarity determinant.</title>
        <authorList>
            <person name="Chen J.C."/>
            <person name="Viollier P.H."/>
            <person name="Shapiro L."/>
        </authorList>
    </citation>
    <scope>CHARACTERIZATION</scope>
    <source>
        <strain>ATCC 19089 / CIP 103742 / CB 15</strain>
    </source>
</reference>
<evidence type="ECO:0000250" key="1"/>
<evidence type="ECO:0000255" key="2"/>
<evidence type="ECO:0000305" key="3"/>
<organism>
    <name type="scientific">Caulobacter vibrioides (strain ATCC 19089 / CIP 103742 / CB 15)</name>
    <name type="common">Caulobacter crescentus</name>
    <dbReference type="NCBI Taxonomy" id="190650"/>
    <lineage>
        <taxon>Bacteria</taxon>
        <taxon>Pseudomonadati</taxon>
        <taxon>Pseudomonadota</taxon>
        <taxon>Alphaproteobacteria</taxon>
        <taxon>Caulobacterales</taxon>
        <taxon>Caulobacteraceae</taxon>
        <taxon>Caulobacter</taxon>
    </lineage>
</organism>
<name>MMPA_CAUVC</name>
<gene>
    <name type="primary">mmpA</name>
    <name type="ordered locus">CC_1916</name>
</gene>
<accession>Q9A710</accession>
<keyword id="KW-0131">Cell cycle</keyword>
<keyword id="KW-0132">Cell division</keyword>
<keyword id="KW-0997">Cell inner membrane</keyword>
<keyword id="KW-1003">Cell membrane</keyword>
<keyword id="KW-0221">Differentiation</keyword>
<keyword id="KW-0378">Hydrolase</keyword>
<keyword id="KW-0472">Membrane</keyword>
<keyword id="KW-0479">Metal-binding</keyword>
<keyword id="KW-0482">Metalloprotease</keyword>
<keyword id="KW-0645">Protease</keyword>
<keyword id="KW-1185">Reference proteome</keyword>
<keyword id="KW-0812">Transmembrane</keyword>
<keyword id="KW-1133">Transmembrane helix</keyword>
<keyword id="KW-0862">Zinc</keyword>
<proteinExistence type="evidence at protein level"/>
<feature type="chain" id="PRO_0000088424" description="Metalloprotease MmpA">
    <location>
        <begin position="1"/>
        <end position="398"/>
    </location>
</feature>
<feature type="transmembrane region" description="Helical" evidence="2">
    <location>
        <begin position="117"/>
        <end position="139"/>
    </location>
</feature>
<feature type="transmembrane region" description="Helical" evidence="2">
    <location>
        <begin position="316"/>
        <end position="338"/>
    </location>
</feature>
<feature type="transmembrane region" description="Helical" evidence="2">
    <location>
        <begin position="362"/>
        <end position="381"/>
    </location>
</feature>
<feature type="domain" description="PDZ">
    <location>
        <begin position="130"/>
        <end position="203"/>
    </location>
</feature>
<feature type="active site" evidence="3">
    <location>
        <position position="23"/>
    </location>
</feature>
<feature type="binding site" evidence="3">
    <location>
        <position position="22"/>
    </location>
    <ligand>
        <name>Zn(2+)</name>
        <dbReference type="ChEBI" id="CHEBI:29105"/>
        <note>catalytic</note>
    </ligand>
</feature>
<feature type="binding site" evidence="3">
    <location>
        <position position="26"/>
    </location>
    <ligand>
        <name>Zn(2+)</name>
        <dbReference type="ChEBI" id="CHEBI:29105"/>
        <note>catalytic</note>
    </ligand>
</feature>
<dbReference type="EC" id="3.4.24.-"/>
<dbReference type="EMBL" id="AE005673">
    <property type="protein sequence ID" value="AAK23891.1"/>
    <property type="molecule type" value="Genomic_DNA"/>
</dbReference>
<dbReference type="PIR" id="G87486">
    <property type="entry name" value="G87486"/>
</dbReference>
<dbReference type="RefSeq" id="NP_420723.1">
    <property type="nucleotide sequence ID" value="NC_002696.2"/>
</dbReference>
<dbReference type="RefSeq" id="WP_010919782.1">
    <property type="nucleotide sequence ID" value="NC_002696.2"/>
</dbReference>
<dbReference type="SMR" id="Q9A710"/>
<dbReference type="STRING" id="190650.CC_1916"/>
<dbReference type="EnsemblBacteria" id="AAK23891">
    <property type="protein sequence ID" value="AAK23891"/>
    <property type="gene ID" value="CC_1916"/>
</dbReference>
<dbReference type="KEGG" id="ccr:CC_1916"/>
<dbReference type="PATRIC" id="fig|190650.5.peg.1933"/>
<dbReference type="eggNOG" id="COG0750">
    <property type="taxonomic scope" value="Bacteria"/>
</dbReference>
<dbReference type="HOGENOM" id="CLU_025778_1_0_5"/>
<dbReference type="BioCyc" id="CAULO:CC1916-MONOMER"/>
<dbReference type="Proteomes" id="UP000001816">
    <property type="component" value="Chromosome"/>
</dbReference>
<dbReference type="GO" id="GO:0005886">
    <property type="term" value="C:plasma membrane"/>
    <property type="evidence" value="ECO:0007669"/>
    <property type="project" value="UniProtKB-SubCell"/>
</dbReference>
<dbReference type="GO" id="GO:0046872">
    <property type="term" value="F:metal ion binding"/>
    <property type="evidence" value="ECO:0007669"/>
    <property type="project" value="UniProtKB-KW"/>
</dbReference>
<dbReference type="GO" id="GO:0004222">
    <property type="term" value="F:metalloendopeptidase activity"/>
    <property type="evidence" value="ECO:0007669"/>
    <property type="project" value="InterPro"/>
</dbReference>
<dbReference type="GO" id="GO:0030154">
    <property type="term" value="P:cell differentiation"/>
    <property type="evidence" value="ECO:0007669"/>
    <property type="project" value="UniProtKB-KW"/>
</dbReference>
<dbReference type="GO" id="GO:0051301">
    <property type="term" value="P:cell division"/>
    <property type="evidence" value="ECO:0007669"/>
    <property type="project" value="UniProtKB-KW"/>
</dbReference>
<dbReference type="GO" id="GO:0006508">
    <property type="term" value="P:proteolysis"/>
    <property type="evidence" value="ECO:0007669"/>
    <property type="project" value="UniProtKB-KW"/>
</dbReference>
<dbReference type="CDD" id="cd23081">
    <property type="entry name" value="cpPDZ_EcRseP-like"/>
    <property type="match status" value="1"/>
</dbReference>
<dbReference type="CDD" id="cd06163">
    <property type="entry name" value="S2P-M50_PDZ_RseP-like"/>
    <property type="match status" value="1"/>
</dbReference>
<dbReference type="Gene3D" id="2.30.42.10">
    <property type="match status" value="1"/>
</dbReference>
<dbReference type="InterPro" id="IPR001478">
    <property type="entry name" value="PDZ"/>
</dbReference>
<dbReference type="InterPro" id="IPR036034">
    <property type="entry name" value="PDZ_sf"/>
</dbReference>
<dbReference type="InterPro" id="IPR004387">
    <property type="entry name" value="Pept_M50_Zn"/>
</dbReference>
<dbReference type="InterPro" id="IPR008915">
    <property type="entry name" value="Peptidase_M50"/>
</dbReference>
<dbReference type="PANTHER" id="PTHR42837:SF2">
    <property type="entry name" value="MEMBRANE METALLOPROTEASE ARASP2, CHLOROPLASTIC-RELATED"/>
    <property type="match status" value="1"/>
</dbReference>
<dbReference type="PANTHER" id="PTHR42837">
    <property type="entry name" value="REGULATOR OF SIGMA-E PROTEASE RSEP"/>
    <property type="match status" value="1"/>
</dbReference>
<dbReference type="Pfam" id="PF13180">
    <property type="entry name" value="PDZ_2"/>
    <property type="match status" value="1"/>
</dbReference>
<dbReference type="Pfam" id="PF02163">
    <property type="entry name" value="Peptidase_M50"/>
    <property type="match status" value="1"/>
</dbReference>
<dbReference type="SMART" id="SM00228">
    <property type="entry name" value="PDZ"/>
    <property type="match status" value="1"/>
</dbReference>
<dbReference type="SUPFAM" id="SSF50156">
    <property type="entry name" value="PDZ domain-like"/>
    <property type="match status" value="1"/>
</dbReference>
<dbReference type="PROSITE" id="PS00142">
    <property type="entry name" value="ZINC_PROTEASE"/>
    <property type="match status" value="1"/>
</dbReference>
<sequence>MIGFLIMLVSLLFVLSVVVTVHELGHYWAARACGVAIERFSIGFGAPLISWRDKRGVEWCVASIPLGGYVRFAGDENAASVPDQNDLDAMRNEIRRREGDDAVNRYFHFKPVWQRAFIAVAGPMANFILAILVFAVILVSFGAQKTSTTVGEVVAGTPAAAAGFKPGDVILKADNRQIRSFQDIQGYVALRANMPIDFAVERDGRTVHLTATPRLVERQNEISGRVKVGELGLRSAPGGRFERSSLLSAIPDATVEVWDMIKTIAFYLGRLLMGQLPADQISGIIGIGHTAGAVTNGVVEQAPNGKALAIGLIYSQFWLIASLSVSIGFMNLLPIPVLDGGHLVMYAYEAVAKRPLRAEFQAAGFRAGLALILGFMLFAAWNDLNRYDVFKFIGGLFT</sequence>